<reference key="1">
    <citation type="journal article" date="2009" name="Stand. Genomic Sci.">
        <title>Complete genome sequence of Beutenbergia cavernae type strain (HKI 0122).</title>
        <authorList>
            <person name="Land M."/>
            <person name="Pukall R."/>
            <person name="Abt B."/>
            <person name="Goker M."/>
            <person name="Rohde M."/>
            <person name="Glavina Del Rio T."/>
            <person name="Tice H."/>
            <person name="Copeland A."/>
            <person name="Cheng J.F."/>
            <person name="Lucas S."/>
            <person name="Chen F."/>
            <person name="Nolan M."/>
            <person name="Bruce D."/>
            <person name="Goodwin L."/>
            <person name="Pitluck S."/>
            <person name="Ivanova N."/>
            <person name="Mavromatis K."/>
            <person name="Ovchinnikova G."/>
            <person name="Pati A."/>
            <person name="Chen A."/>
            <person name="Palaniappan K."/>
            <person name="Hauser L."/>
            <person name="Chang Y.J."/>
            <person name="Jefferies C.C."/>
            <person name="Saunders E."/>
            <person name="Brettin T."/>
            <person name="Detter J.C."/>
            <person name="Han C."/>
            <person name="Chain P."/>
            <person name="Bristow J."/>
            <person name="Eisen J.A."/>
            <person name="Markowitz V."/>
            <person name="Hugenholtz P."/>
            <person name="Kyrpides N.C."/>
            <person name="Klenk H.P."/>
            <person name="Lapidus A."/>
        </authorList>
    </citation>
    <scope>NUCLEOTIDE SEQUENCE [LARGE SCALE GENOMIC DNA]</scope>
    <source>
        <strain>ATCC BAA-8 / DSM 12333 / CCUG 43141 / JCM 11478 / NBRC 16432 / NCIMB 13614 / HKI 0122</strain>
    </source>
</reference>
<sequence length="238" mass="25207">MTAQSKNYRKAASAIDRDRLYAPLEAVRLAKAGASTKFDSTVEVAFRLGVDPRKADQMVRGTVNLPHGTGKTARVLVFAVGERAEQARAAGADEVGGDELIEKVAGGYVDFDAAVATPDLMGKVGRLGRVLGPRGLMPNPRTGTVTMDVAKAVEEIKGGKIDFRVDKHANLHVVVGKASFDETALVENYASVLDEVLRLKPSSSKGRYIVKATLSTTMGPGIPLDASKTRNLTGEDAA</sequence>
<feature type="chain" id="PRO_1000214412" description="Large ribosomal subunit protein uL1">
    <location>
        <begin position="1"/>
        <end position="238"/>
    </location>
</feature>
<protein>
    <recommendedName>
        <fullName evidence="1">Large ribosomal subunit protein uL1</fullName>
    </recommendedName>
    <alternativeName>
        <fullName evidence="2">50S ribosomal protein L1</fullName>
    </alternativeName>
</protein>
<dbReference type="EMBL" id="CP001618">
    <property type="protein sequence ID" value="ACQ81404.1"/>
    <property type="molecule type" value="Genomic_DNA"/>
</dbReference>
<dbReference type="RefSeq" id="WP_015883644.1">
    <property type="nucleotide sequence ID" value="NC_012669.1"/>
</dbReference>
<dbReference type="SMR" id="C5C0K8"/>
<dbReference type="STRING" id="471853.Bcav_3160"/>
<dbReference type="KEGG" id="bcv:Bcav_3160"/>
<dbReference type="eggNOG" id="COG0081">
    <property type="taxonomic scope" value="Bacteria"/>
</dbReference>
<dbReference type="HOGENOM" id="CLU_062853_0_0_11"/>
<dbReference type="OrthoDB" id="9803740at2"/>
<dbReference type="Proteomes" id="UP000007962">
    <property type="component" value="Chromosome"/>
</dbReference>
<dbReference type="GO" id="GO:0015934">
    <property type="term" value="C:large ribosomal subunit"/>
    <property type="evidence" value="ECO:0007669"/>
    <property type="project" value="InterPro"/>
</dbReference>
<dbReference type="GO" id="GO:0019843">
    <property type="term" value="F:rRNA binding"/>
    <property type="evidence" value="ECO:0007669"/>
    <property type="project" value="UniProtKB-UniRule"/>
</dbReference>
<dbReference type="GO" id="GO:0003735">
    <property type="term" value="F:structural constituent of ribosome"/>
    <property type="evidence" value="ECO:0007669"/>
    <property type="project" value="InterPro"/>
</dbReference>
<dbReference type="GO" id="GO:0000049">
    <property type="term" value="F:tRNA binding"/>
    <property type="evidence" value="ECO:0007669"/>
    <property type="project" value="UniProtKB-KW"/>
</dbReference>
<dbReference type="GO" id="GO:0006417">
    <property type="term" value="P:regulation of translation"/>
    <property type="evidence" value="ECO:0007669"/>
    <property type="project" value="UniProtKB-KW"/>
</dbReference>
<dbReference type="GO" id="GO:0006412">
    <property type="term" value="P:translation"/>
    <property type="evidence" value="ECO:0007669"/>
    <property type="project" value="UniProtKB-UniRule"/>
</dbReference>
<dbReference type="CDD" id="cd00403">
    <property type="entry name" value="Ribosomal_L1"/>
    <property type="match status" value="1"/>
</dbReference>
<dbReference type="FunFam" id="3.40.50.790:FF:000001">
    <property type="entry name" value="50S ribosomal protein L1"/>
    <property type="match status" value="1"/>
</dbReference>
<dbReference type="Gene3D" id="3.30.190.20">
    <property type="match status" value="1"/>
</dbReference>
<dbReference type="Gene3D" id="3.40.50.790">
    <property type="match status" value="1"/>
</dbReference>
<dbReference type="HAMAP" id="MF_01318_B">
    <property type="entry name" value="Ribosomal_uL1_B"/>
    <property type="match status" value="1"/>
</dbReference>
<dbReference type="InterPro" id="IPR005878">
    <property type="entry name" value="Ribosom_uL1_bac-type"/>
</dbReference>
<dbReference type="InterPro" id="IPR002143">
    <property type="entry name" value="Ribosomal_uL1"/>
</dbReference>
<dbReference type="InterPro" id="IPR023674">
    <property type="entry name" value="Ribosomal_uL1-like"/>
</dbReference>
<dbReference type="InterPro" id="IPR028364">
    <property type="entry name" value="Ribosomal_uL1/biogenesis"/>
</dbReference>
<dbReference type="InterPro" id="IPR016095">
    <property type="entry name" value="Ribosomal_uL1_3-a/b-sand"/>
</dbReference>
<dbReference type="InterPro" id="IPR023673">
    <property type="entry name" value="Ribosomal_uL1_CS"/>
</dbReference>
<dbReference type="NCBIfam" id="TIGR01169">
    <property type="entry name" value="rplA_bact"/>
    <property type="match status" value="1"/>
</dbReference>
<dbReference type="PANTHER" id="PTHR36427">
    <property type="entry name" value="54S RIBOSOMAL PROTEIN L1, MITOCHONDRIAL"/>
    <property type="match status" value="1"/>
</dbReference>
<dbReference type="PANTHER" id="PTHR36427:SF3">
    <property type="entry name" value="LARGE RIBOSOMAL SUBUNIT PROTEIN UL1M"/>
    <property type="match status" value="1"/>
</dbReference>
<dbReference type="Pfam" id="PF00687">
    <property type="entry name" value="Ribosomal_L1"/>
    <property type="match status" value="1"/>
</dbReference>
<dbReference type="PIRSF" id="PIRSF002155">
    <property type="entry name" value="Ribosomal_L1"/>
    <property type="match status" value="1"/>
</dbReference>
<dbReference type="SUPFAM" id="SSF56808">
    <property type="entry name" value="Ribosomal protein L1"/>
    <property type="match status" value="1"/>
</dbReference>
<dbReference type="PROSITE" id="PS01199">
    <property type="entry name" value="RIBOSOMAL_L1"/>
    <property type="match status" value="1"/>
</dbReference>
<organism>
    <name type="scientific">Beutenbergia cavernae (strain ATCC BAA-8 / DSM 12333 / CCUG 43141 / JCM 11478 / NBRC 16432 / NCIMB 13614 / HKI 0122)</name>
    <dbReference type="NCBI Taxonomy" id="471853"/>
    <lineage>
        <taxon>Bacteria</taxon>
        <taxon>Bacillati</taxon>
        <taxon>Actinomycetota</taxon>
        <taxon>Actinomycetes</taxon>
        <taxon>Micrococcales</taxon>
        <taxon>Beutenbergiaceae</taxon>
        <taxon>Beutenbergia</taxon>
    </lineage>
</organism>
<keyword id="KW-1185">Reference proteome</keyword>
<keyword id="KW-0678">Repressor</keyword>
<keyword id="KW-0687">Ribonucleoprotein</keyword>
<keyword id="KW-0689">Ribosomal protein</keyword>
<keyword id="KW-0694">RNA-binding</keyword>
<keyword id="KW-0699">rRNA-binding</keyword>
<keyword id="KW-0810">Translation regulation</keyword>
<keyword id="KW-0820">tRNA-binding</keyword>
<name>RL1_BEUC1</name>
<proteinExistence type="inferred from homology"/>
<evidence type="ECO:0000255" key="1">
    <source>
        <dbReference type="HAMAP-Rule" id="MF_01318"/>
    </source>
</evidence>
<evidence type="ECO:0000305" key="2"/>
<gene>
    <name evidence="1" type="primary">rplA</name>
    <name type="ordered locus">Bcav_3160</name>
</gene>
<accession>C5C0K8</accession>
<comment type="function">
    <text evidence="1">Binds directly to 23S rRNA. The L1 stalk is quite mobile in the ribosome, and is involved in E site tRNA release.</text>
</comment>
<comment type="function">
    <text evidence="1">Protein L1 is also a translational repressor protein, it controls the translation of the L11 operon by binding to its mRNA.</text>
</comment>
<comment type="subunit">
    <text evidence="1">Part of the 50S ribosomal subunit.</text>
</comment>
<comment type="similarity">
    <text evidence="1">Belongs to the universal ribosomal protein uL1 family.</text>
</comment>